<dbReference type="EMBL" id="AE000512">
    <property type="protein sequence ID" value="AAD36827.1"/>
    <property type="molecule type" value="Genomic_DNA"/>
</dbReference>
<dbReference type="PIR" id="B72212">
    <property type="entry name" value="B72212"/>
</dbReference>
<dbReference type="RefSeq" id="NP_229560.1">
    <property type="nucleotide sequence ID" value="NC_000853.1"/>
</dbReference>
<dbReference type="RefSeq" id="WP_004082309.1">
    <property type="nucleotide sequence ID" value="NC_000853.1"/>
</dbReference>
<dbReference type="SMR" id="Q9X284"/>
<dbReference type="FunCoup" id="Q9X284">
    <property type="interactions" value="389"/>
</dbReference>
<dbReference type="STRING" id="243274.TM_1763"/>
<dbReference type="PaxDb" id="243274-THEMA_05410"/>
<dbReference type="EnsemblBacteria" id="AAD36827">
    <property type="protein sequence ID" value="AAD36827"/>
    <property type="gene ID" value="TM_1763"/>
</dbReference>
<dbReference type="KEGG" id="tma:TM1763"/>
<dbReference type="KEGG" id="tmi:THEMA_05410"/>
<dbReference type="KEGG" id="tmm:Tmari_1772"/>
<dbReference type="KEGG" id="tmw:THMA_1807"/>
<dbReference type="eggNOG" id="COG0231">
    <property type="taxonomic scope" value="Bacteria"/>
</dbReference>
<dbReference type="InParanoid" id="Q9X284"/>
<dbReference type="OrthoDB" id="9801844at2"/>
<dbReference type="UniPathway" id="UPA00345"/>
<dbReference type="Proteomes" id="UP000008183">
    <property type="component" value="Chromosome"/>
</dbReference>
<dbReference type="GO" id="GO:0005737">
    <property type="term" value="C:cytoplasm"/>
    <property type="evidence" value="ECO:0000318"/>
    <property type="project" value="GO_Central"/>
</dbReference>
<dbReference type="GO" id="GO:0003746">
    <property type="term" value="F:translation elongation factor activity"/>
    <property type="evidence" value="ECO:0000318"/>
    <property type="project" value="GO_Central"/>
</dbReference>
<dbReference type="GO" id="GO:0043043">
    <property type="term" value="P:peptide biosynthetic process"/>
    <property type="evidence" value="ECO:0007669"/>
    <property type="project" value="InterPro"/>
</dbReference>
<dbReference type="CDD" id="cd04470">
    <property type="entry name" value="S1_EF-P_repeat_1"/>
    <property type="match status" value="1"/>
</dbReference>
<dbReference type="CDD" id="cd05794">
    <property type="entry name" value="S1_EF-P_repeat_2"/>
    <property type="match status" value="1"/>
</dbReference>
<dbReference type="FunFam" id="2.30.30.30:FF:000003">
    <property type="entry name" value="Elongation factor P"/>
    <property type="match status" value="1"/>
</dbReference>
<dbReference type="FunFam" id="2.40.50.140:FF:000004">
    <property type="entry name" value="Elongation factor P"/>
    <property type="match status" value="1"/>
</dbReference>
<dbReference type="FunFam" id="2.40.50.140:FF:000009">
    <property type="entry name" value="Elongation factor P"/>
    <property type="match status" value="1"/>
</dbReference>
<dbReference type="Gene3D" id="2.30.30.30">
    <property type="match status" value="1"/>
</dbReference>
<dbReference type="Gene3D" id="2.40.50.140">
    <property type="entry name" value="Nucleic acid-binding proteins"/>
    <property type="match status" value="2"/>
</dbReference>
<dbReference type="HAMAP" id="MF_00141">
    <property type="entry name" value="EF_P"/>
    <property type="match status" value="1"/>
</dbReference>
<dbReference type="InterPro" id="IPR015365">
    <property type="entry name" value="Elong-fact-P_C"/>
</dbReference>
<dbReference type="InterPro" id="IPR012340">
    <property type="entry name" value="NA-bd_OB-fold"/>
</dbReference>
<dbReference type="InterPro" id="IPR014722">
    <property type="entry name" value="Rib_uL2_dom2"/>
</dbReference>
<dbReference type="InterPro" id="IPR020599">
    <property type="entry name" value="Transl_elong_fac_P/YeiP"/>
</dbReference>
<dbReference type="InterPro" id="IPR013185">
    <property type="entry name" value="Transl_elong_KOW-like"/>
</dbReference>
<dbReference type="InterPro" id="IPR001059">
    <property type="entry name" value="Transl_elong_P/YeiP_cen"/>
</dbReference>
<dbReference type="InterPro" id="IPR013852">
    <property type="entry name" value="Transl_elong_P/YeiP_CS"/>
</dbReference>
<dbReference type="InterPro" id="IPR011768">
    <property type="entry name" value="Transl_elongation_fac_P"/>
</dbReference>
<dbReference type="InterPro" id="IPR008991">
    <property type="entry name" value="Translation_prot_SH3-like_sf"/>
</dbReference>
<dbReference type="NCBIfam" id="TIGR00038">
    <property type="entry name" value="efp"/>
    <property type="match status" value="1"/>
</dbReference>
<dbReference type="NCBIfam" id="NF001810">
    <property type="entry name" value="PRK00529.1"/>
    <property type="match status" value="1"/>
</dbReference>
<dbReference type="PANTHER" id="PTHR30053">
    <property type="entry name" value="ELONGATION FACTOR P"/>
    <property type="match status" value="1"/>
</dbReference>
<dbReference type="PANTHER" id="PTHR30053:SF12">
    <property type="entry name" value="ELONGATION FACTOR P (EF-P) FAMILY PROTEIN"/>
    <property type="match status" value="1"/>
</dbReference>
<dbReference type="Pfam" id="PF01132">
    <property type="entry name" value="EFP"/>
    <property type="match status" value="1"/>
</dbReference>
<dbReference type="Pfam" id="PF08207">
    <property type="entry name" value="EFP_N"/>
    <property type="match status" value="1"/>
</dbReference>
<dbReference type="Pfam" id="PF09285">
    <property type="entry name" value="Elong-fact-P_C"/>
    <property type="match status" value="1"/>
</dbReference>
<dbReference type="PIRSF" id="PIRSF005901">
    <property type="entry name" value="EF-P"/>
    <property type="match status" value="1"/>
</dbReference>
<dbReference type="SMART" id="SM01185">
    <property type="entry name" value="EFP"/>
    <property type="match status" value="1"/>
</dbReference>
<dbReference type="SMART" id="SM00841">
    <property type="entry name" value="Elong-fact-P_C"/>
    <property type="match status" value="1"/>
</dbReference>
<dbReference type="SUPFAM" id="SSF50249">
    <property type="entry name" value="Nucleic acid-binding proteins"/>
    <property type="match status" value="2"/>
</dbReference>
<dbReference type="SUPFAM" id="SSF50104">
    <property type="entry name" value="Translation proteins SH3-like domain"/>
    <property type="match status" value="1"/>
</dbReference>
<dbReference type="PROSITE" id="PS01275">
    <property type="entry name" value="EFP"/>
    <property type="match status" value="1"/>
</dbReference>
<feature type="chain" id="PRO_0000094355" description="Elongation factor P">
    <location>
        <begin position="1"/>
        <end position="185"/>
    </location>
</feature>
<protein>
    <recommendedName>
        <fullName>Elongation factor P</fullName>
        <shortName>EF-P</shortName>
    </recommendedName>
</protein>
<name>EFP_THEMA</name>
<sequence length="185" mass="20875">MIEVGDLKKGMFIIYDGEIYRVLEASKHFMGRGSGLIRTKLKNVKTGFVREVNFPSGEKVQEAELSFRKAQYLYRDGDHYYFMTLDDYEQYALSEEEIGDAKYYLVENMEVDLVFHEGTPIGIELPTTVELTVVETEPSFKGDTVSGGGKPAVLETGLKITVPYFIEVGDKIKVDTRTGEYVGRA</sequence>
<reference key="1">
    <citation type="journal article" date="1999" name="Nature">
        <title>Evidence for lateral gene transfer between Archaea and Bacteria from genome sequence of Thermotoga maritima.</title>
        <authorList>
            <person name="Nelson K.E."/>
            <person name="Clayton R.A."/>
            <person name="Gill S.R."/>
            <person name="Gwinn M.L."/>
            <person name="Dodson R.J."/>
            <person name="Haft D.H."/>
            <person name="Hickey E.K."/>
            <person name="Peterson J.D."/>
            <person name="Nelson W.C."/>
            <person name="Ketchum K.A."/>
            <person name="McDonald L.A."/>
            <person name="Utterback T.R."/>
            <person name="Malek J.A."/>
            <person name="Linher K.D."/>
            <person name="Garrett M.M."/>
            <person name="Stewart A.M."/>
            <person name="Cotton M.D."/>
            <person name="Pratt M.S."/>
            <person name="Phillips C.A."/>
            <person name="Richardson D.L."/>
            <person name="Heidelberg J.F."/>
            <person name="Sutton G.G."/>
            <person name="Fleischmann R.D."/>
            <person name="Eisen J.A."/>
            <person name="White O."/>
            <person name="Salzberg S.L."/>
            <person name="Smith H.O."/>
            <person name="Venter J.C."/>
            <person name="Fraser C.M."/>
        </authorList>
    </citation>
    <scope>NUCLEOTIDE SEQUENCE [LARGE SCALE GENOMIC DNA]</scope>
    <source>
        <strain>ATCC 43589 / DSM 3109 / JCM 10099 / NBRC 100826 / MSB8</strain>
    </source>
</reference>
<accession>Q9X284</accession>
<gene>
    <name type="primary">efp</name>
    <name type="ordered locus">TM_1763</name>
</gene>
<organism>
    <name type="scientific">Thermotoga maritima (strain ATCC 43589 / DSM 3109 / JCM 10099 / NBRC 100826 / MSB8)</name>
    <dbReference type="NCBI Taxonomy" id="243274"/>
    <lineage>
        <taxon>Bacteria</taxon>
        <taxon>Thermotogati</taxon>
        <taxon>Thermotogota</taxon>
        <taxon>Thermotogae</taxon>
        <taxon>Thermotogales</taxon>
        <taxon>Thermotogaceae</taxon>
        <taxon>Thermotoga</taxon>
    </lineage>
</organism>
<proteinExistence type="inferred from homology"/>
<evidence type="ECO:0000250" key="1"/>
<evidence type="ECO:0000305" key="2"/>
<comment type="function">
    <text evidence="1">Involved in peptide bond synthesis. Stimulates efficient translation and peptide-bond synthesis on native or reconstituted 70S ribosomes in vitro. Probably functions indirectly by altering the affinity of the ribosome for aminoacyl-tRNA, thus increasing their reactivity as acceptors for peptidyl transferase (By similarity).</text>
</comment>
<comment type="pathway">
    <text>Protein biosynthesis; polypeptide chain elongation.</text>
</comment>
<comment type="subcellular location">
    <subcellularLocation>
        <location evidence="1">Cytoplasm</location>
    </subcellularLocation>
</comment>
<comment type="similarity">
    <text evidence="2">Belongs to the elongation factor P family.</text>
</comment>
<keyword id="KW-0963">Cytoplasm</keyword>
<keyword id="KW-0251">Elongation factor</keyword>
<keyword id="KW-0648">Protein biosynthesis</keyword>
<keyword id="KW-1185">Reference proteome</keyword>